<organism>
    <name type="scientific">Natrialba magadii (strain ATCC 43099 / DSM 3394 / CCM 3739 / CIP 104546 / IAM 13178 / JCM 8861 / NBRC 102185 / NCIMB 2190 / MS3)</name>
    <name type="common">Natronobacterium magadii</name>
    <dbReference type="NCBI Taxonomy" id="547559"/>
    <lineage>
        <taxon>Archaea</taxon>
        <taxon>Methanobacteriati</taxon>
        <taxon>Methanobacteriota</taxon>
        <taxon>Stenosarchaea group</taxon>
        <taxon>Halobacteria</taxon>
        <taxon>Halobacteriales</taxon>
        <taxon>Natrialbaceae</taxon>
        <taxon>Natrialba</taxon>
    </lineage>
</organism>
<comment type="function">
    <text>Flagellin is the subunit protein which polymerizes to form the filaments of archaeal flagella.</text>
</comment>
<comment type="subcellular location">
    <subcellularLocation>
        <location>Archaeal flagellum</location>
    </subcellularLocation>
</comment>
<comment type="similarity">
    <text evidence="2">Belongs to the archaeal flagellin family.</text>
</comment>
<proteinExistence type="inferred from homology"/>
<gene>
    <name type="primary">flaB1</name>
    <name type="ordered locus">Nmag_2862</name>
</gene>
<accession>Q9P9I3</accession>
<accession>D3T0D6</accession>
<protein>
    <recommendedName>
        <fullName>Flagellin B1</fullName>
    </recommendedName>
</protein>
<feature type="propeptide" id="PRO_0000009393" evidence="1">
    <location>
        <begin position="1"/>
        <end position="11"/>
    </location>
</feature>
<feature type="chain" id="PRO_0000009394" description="Flagellin B1">
    <location>
        <begin position="12"/>
        <end position="201"/>
    </location>
</feature>
<feature type="sequence conflict" description="In Ref. 1; CAB93655." evidence="2" ref="1">
    <original>S</original>
    <variation>T</variation>
    <location>
        <position position="129"/>
    </location>
</feature>
<sequence length="201" mass="21418">MFEQNDDRDRGQVGIGTLIVFIAMVLVAAIAAGVLINTAGMLQTQAEATGEESTDQVSDRLDIVSVSGDVDDPDDPTQINNISMVTATAPGSDPVDLNQTTAQFIGEGGEEMFNLSHEGVFINSIQGVSDEPDNNVLTESSDRAEVVFELDGAPGSYDIGYEALDESERLTVILTTDAGASTEQEIRVPSTFIEDEESVRL</sequence>
<dbReference type="EMBL" id="AJ277988">
    <property type="protein sequence ID" value="CAB93655.1"/>
    <property type="molecule type" value="Genomic_DNA"/>
</dbReference>
<dbReference type="EMBL" id="CP001932">
    <property type="protein sequence ID" value="ADD06415.1"/>
    <property type="molecule type" value="Genomic_DNA"/>
</dbReference>
<dbReference type="RefSeq" id="WP_004267190.1">
    <property type="nucleotide sequence ID" value="NC_013922.1"/>
</dbReference>
<dbReference type="SMR" id="Q9P9I3"/>
<dbReference type="STRING" id="547559.Nmag_2862"/>
<dbReference type="PaxDb" id="547559-Nmag_2862"/>
<dbReference type="GeneID" id="8825721"/>
<dbReference type="KEGG" id="nmg:Nmag_2862"/>
<dbReference type="eggNOG" id="arCOG01829">
    <property type="taxonomic scope" value="Archaea"/>
</dbReference>
<dbReference type="HOGENOM" id="CLU_051124_1_0_2"/>
<dbReference type="OrthoDB" id="102632at2157"/>
<dbReference type="Proteomes" id="UP000001879">
    <property type="component" value="Chromosome"/>
</dbReference>
<dbReference type="GO" id="GO:0097589">
    <property type="term" value="C:archaeal-type flagellum"/>
    <property type="evidence" value="ECO:0007669"/>
    <property type="project" value="UniProtKB-SubCell"/>
</dbReference>
<dbReference type="GO" id="GO:0005198">
    <property type="term" value="F:structural molecule activity"/>
    <property type="evidence" value="ECO:0007669"/>
    <property type="project" value="InterPro"/>
</dbReference>
<dbReference type="GO" id="GO:0097588">
    <property type="term" value="P:archaeal or bacterial-type flagellum-dependent cell motility"/>
    <property type="evidence" value="ECO:0007669"/>
    <property type="project" value="InterPro"/>
</dbReference>
<dbReference type="InterPro" id="IPR013373">
    <property type="entry name" value="Flagellin/pilin_N_arc"/>
</dbReference>
<dbReference type="InterPro" id="IPR002774">
    <property type="entry name" value="Flagellin_arc"/>
</dbReference>
<dbReference type="NCBIfam" id="TIGR02537">
    <property type="entry name" value="arch_flag_Nterm"/>
    <property type="match status" value="1"/>
</dbReference>
<dbReference type="PANTHER" id="PTHR35903">
    <property type="entry name" value="FLAGELLIN B1"/>
    <property type="match status" value="1"/>
</dbReference>
<dbReference type="PANTHER" id="PTHR35903:SF1">
    <property type="entry name" value="FLAGELLIN B1"/>
    <property type="match status" value="1"/>
</dbReference>
<dbReference type="Pfam" id="PF01917">
    <property type="entry name" value="Arch_flagellin"/>
    <property type="match status" value="1"/>
</dbReference>
<name>FLAB1_NATMM</name>
<keyword id="KW-0974">Archaeal flagellum</keyword>
<keyword id="KW-1185">Reference proteome</keyword>
<reference key="1">
    <citation type="journal article" date="2002" name="J. Bacteriol.">
        <title>Sequencing of flagellin genes from Natrialba magadii provides new insight into evolutionary aspects of archaeal flagellins.</title>
        <authorList>
            <person name="Serganova I."/>
            <person name="Ksenzenko V."/>
            <person name="Serganov A."/>
            <person name="Meshcheryakova I."/>
            <person name="Pyatibratov M."/>
            <person name="Vakhrusheva O."/>
            <person name="Metlina A."/>
            <person name="Fedorov O."/>
        </authorList>
    </citation>
    <scope>NUCLEOTIDE SEQUENCE [GENOMIC DNA]</scope>
</reference>
<reference key="2">
    <citation type="journal article" date="2012" name="BMC Genomics">
        <title>A comparative genomics perspective on the genetic content of the alkaliphilic haloarchaeon Natrialba magadii ATCC 43099T.</title>
        <authorList>
            <person name="Siddaramappa S."/>
            <person name="Challacombe J.F."/>
            <person name="Decastro R.E."/>
            <person name="Pfeiffer F."/>
            <person name="Sastre D.E."/>
            <person name="Gimenez M.I."/>
            <person name="Paggi R.A."/>
            <person name="Detter J.C."/>
            <person name="Davenport K.W."/>
            <person name="Goodwin L.A."/>
            <person name="Kyrpides N."/>
            <person name="Tapia R."/>
            <person name="Pitluck S."/>
            <person name="Lucas S."/>
            <person name="Woyke T."/>
            <person name="Maupin-Furlow J.A."/>
        </authorList>
    </citation>
    <scope>NUCLEOTIDE SEQUENCE [LARGE SCALE GENOMIC DNA]</scope>
    <source>
        <strain>ATCC 43099 / DSM 3394 / CCM 3739 / CIP 104546 / IAM 13178 / JCM 8861 / NBRC 102185 / NCIMB 2190 / MS3</strain>
    </source>
</reference>
<evidence type="ECO:0000250" key="1"/>
<evidence type="ECO:0000305" key="2"/>